<feature type="chain" id="PRO_1000122882" description="Large ribosomal subunit protein bL34">
    <location>
        <begin position="1"/>
        <end position="44"/>
    </location>
</feature>
<feature type="region of interest" description="Disordered" evidence="2">
    <location>
        <begin position="24"/>
        <end position="44"/>
    </location>
</feature>
<feature type="compositionally biased region" description="Basic residues" evidence="2">
    <location>
        <begin position="31"/>
        <end position="44"/>
    </location>
</feature>
<reference key="1">
    <citation type="journal article" date="2008" name="PLoS ONE">
        <title>Comparative analysis of Acinetobacters: three genomes for three lifestyles.</title>
        <authorList>
            <person name="Vallenet D."/>
            <person name="Nordmann P."/>
            <person name="Barbe V."/>
            <person name="Poirel L."/>
            <person name="Mangenot S."/>
            <person name="Bataille E."/>
            <person name="Dossat C."/>
            <person name="Gas S."/>
            <person name="Kreimeyer A."/>
            <person name="Lenoble P."/>
            <person name="Oztas S."/>
            <person name="Poulain J."/>
            <person name="Segurens B."/>
            <person name="Robert C."/>
            <person name="Abergel C."/>
            <person name="Claverie J.-M."/>
            <person name="Raoult D."/>
            <person name="Medigue C."/>
            <person name="Weissenbach J."/>
            <person name="Cruveiller S."/>
        </authorList>
    </citation>
    <scope>NUCLEOTIDE SEQUENCE [LARGE SCALE GENOMIC DNA]</scope>
    <source>
        <strain>SDF</strain>
    </source>
</reference>
<organism>
    <name type="scientific">Acinetobacter baumannii (strain SDF)</name>
    <dbReference type="NCBI Taxonomy" id="509170"/>
    <lineage>
        <taxon>Bacteria</taxon>
        <taxon>Pseudomonadati</taxon>
        <taxon>Pseudomonadota</taxon>
        <taxon>Gammaproteobacteria</taxon>
        <taxon>Moraxellales</taxon>
        <taxon>Moraxellaceae</taxon>
        <taxon>Acinetobacter</taxon>
        <taxon>Acinetobacter calcoaceticus/baumannii complex</taxon>
    </lineage>
</organism>
<proteinExistence type="inferred from homology"/>
<comment type="similarity">
    <text evidence="1">Belongs to the bacterial ribosomal protein bL34 family.</text>
</comment>
<name>RL34_ACIBS</name>
<sequence>MKRTFQPSELKRKRIHGFRARMATKAGRQVLARRRAKGRHSLTV</sequence>
<gene>
    <name evidence="1" type="primary">rpmH</name>
    <name type="ordered locus">ABSDF3683</name>
</gene>
<dbReference type="EMBL" id="CU468230">
    <property type="protein sequence ID" value="CAP02935.1"/>
    <property type="molecule type" value="Genomic_DNA"/>
</dbReference>
<dbReference type="SMR" id="B0VQP8"/>
<dbReference type="KEGG" id="abm:ABSDF3683"/>
<dbReference type="HOGENOM" id="CLU_129938_2_0_6"/>
<dbReference type="Proteomes" id="UP000001741">
    <property type="component" value="Chromosome"/>
</dbReference>
<dbReference type="GO" id="GO:1990904">
    <property type="term" value="C:ribonucleoprotein complex"/>
    <property type="evidence" value="ECO:0007669"/>
    <property type="project" value="UniProtKB-KW"/>
</dbReference>
<dbReference type="GO" id="GO:0005840">
    <property type="term" value="C:ribosome"/>
    <property type="evidence" value="ECO:0007669"/>
    <property type="project" value="UniProtKB-KW"/>
</dbReference>
<dbReference type="GO" id="GO:0003735">
    <property type="term" value="F:structural constituent of ribosome"/>
    <property type="evidence" value="ECO:0007669"/>
    <property type="project" value="InterPro"/>
</dbReference>
<dbReference type="GO" id="GO:0006412">
    <property type="term" value="P:translation"/>
    <property type="evidence" value="ECO:0007669"/>
    <property type="project" value="UniProtKB-UniRule"/>
</dbReference>
<dbReference type="FunFam" id="1.10.287.3980:FF:000001">
    <property type="entry name" value="Mitochondrial ribosomal protein L34"/>
    <property type="match status" value="1"/>
</dbReference>
<dbReference type="Gene3D" id="1.10.287.3980">
    <property type="match status" value="1"/>
</dbReference>
<dbReference type="HAMAP" id="MF_00391">
    <property type="entry name" value="Ribosomal_bL34"/>
    <property type="match status" value="1"/>
</dbReference>
<dbReference type="InterPro" id="IPR000271">
    <property type="entry name" value="Ribosomal_bL34"/>
</dbReference>
<dbReference type="InterPro" id="IPR020939">
    <property type="entry name" value="Ribosomal_bL34_CS"/>
</dbReference>
<dbReference type="NCBIfam" id="TIGR01030">
    <property type="entry name" value="rpmH_bact"/>
    <property type="match status" value="1"/>
</dbReference>
<dbReference type="PANTHER" id="PTHR14503:SF4">
    <property type="entry name" value="LARGE RIBOSOMAL SUBUNIT PROTEIN BL34M"/>
    <property type="match status" value="1"/>
</dbReference>
<dbReference type="PANTHER" id="PTHR14503">
    <property type="entry name" value="MITOCHONDRIAL RIBOSOMAL PROTEIN 34 FAMILY MEMBER"/>
    <property type="match status" value="1"/>
</dbReference>
<dbReference type="Pfam" id="PF00468">
    <property type="entry name" value="Ribosomal_L34"/>
    <property type="match status" value="1"/>
</dbReference>
<dbReference type="PROSITE" id="PS00784">
    <property type="entry name" value="RIBOSOMAL_L34"/>
    <property type="match status" value="1"/>
</dbReference>
<evidence type="ECO:0000255" key="1">
    <source>
        <dbReference type="HAMAP-Rule" id="MF_00391"/>
    </source>
</evidence>
<evidence type="ECO:0000256" key="2">
    <source>
        <dbReference type="SAM" id="MobiDB-lite"/>
    </source>
</evidence>
<evidence type="ECO:0000305" key="3"/>
<accession>B0VQP8</accession>
<keyword id="KW-0687">Ribonucleoprotein</keyword>
<keyword id="KW-0689">Ribosomal protein</keyword>
<protein>
    <recommendedName>
        <fullName evidence="1">Large ribosomal subunit protein bL34</fullName>
    </recommendedName>
    <alternativeName>
        <fullName evidence="3">50S ribosomal protein L34</fullName>
    </alternativeName>
</protein>